<gene>
    <name evidence="1" type="primary">darP</name>
    <name type="ordered locus">KPN78578_45570</name>
    <name type="ORF">KPN_04630</name>
</gene>
<feature type="chain" id="PRO_1000062221" description="Dual-action ribosomal maturation protein DarP">
    <location>
        <begin position="1"/>
        <end position="183"/>
    </location>
</feature>
<protein>
    <recommendedName>
        <fullName evidence="1">Dual-action ribosomal maturation protein DarP</fullName>
    </recommendedName>
    <alternativeName>
        <fullName evidence="1">Large ribosomal subunit assembly factor DarP</fullName>
    </alternativeName>
</protein>
<organism>
    <name type="scientific">Klebsiella pneumoniae subsp. pneumoniae (strain ATCC 700721 / MGH 78578)</name>
    <dbReference type="NCBI Taxonomy" id="272620"/>
    <lineage>
        <taxon>Bacteria</taxon>
        <taxon>Pseudomonadati</taxon>
        <taxon>Pseudomonadota</taxon>
        <taxon>Gammaproteobacteria</taxon>
        <taxon>Enterobacterales</taxon>
        <taxon>Enterobacteriaceae</taxon>
        <taxon>Klebsiella/Raoultella group</taxon>
        <taxon>Klebsiella</taxon>
        <taxon>Klebsiella pneumoniae complex</taxon>
    </lineage>
</organism>
<evidence type="ECO:0000255" key="1">
    <source>
        <dbReference type="HAMAP-Rule" id="MF_00765"/>
    </source>
</evidence>
<comment type="function">
    <text evidence="1">Member of a network of 50S ribosomal subunit biogenesis factors which assembles along the 30S-50S interface, preventing incorrect 23S rRNA structures from forming. Promotes peptidyl transferase center (PTC) maturation.</text>
</comment>
<comment type="subcellular location">
    <subcellularLocation>
        <location evidence="1">Cytoplasm</location>
    </subcellularLocation>
    <text evidence="1">Associates with late stage pre-50S ribosomal subunits.</text>
</comment>
<comment type="similarity">
    <text evidence="1">Belongs to the DarP family.</text>
</comment>
<sequence>MTKQPEDWLDDVPGDDVEDEDDEIIWVSKSEIKRDAEELKRLGAELVDLGKNALDKIPLDTDLRDAIELAQRIKKEGRRRQLQLIGKMLRNRDVDPIRQALDKLKNRHNQQVALFHKLEQIRDRLIDDGDDAVAEVLNLWPDADRQQLRSLIRNAKKEKEGNKPPKSARLIFQYLRELAENEG</sequence>
<proteinExistence type="inferred from homology"/>
<accession>A6THE7</accession>
<dbReference type="EMBL" id="CP000647">
    <property type="protein sequence ID" value="ABR79981.1"/>
    <property type="molecule type" value="Genomic_DNA"/>
</dbReference>
<dbReference type="SMR" id="A6THE7"/>
<dbReference type="STRING" id="272620.KPN_04630"/>
<dbReference type="jPOST" id="A6THE7"/>
<dbReference type="PaxDb" id="272620-KPN_04630"/>
<dbReference type="EnsemblBacteria" id="ABR79981">
    <property type="protein sequence ID" value="ABR79981"/>
    <property type="gene ID" value="KPN_04630"/>
</dbReference>
<dbReference type="KEGG" id="kpn:KPN_04630"/>
<dbReference type="HOGENOM" id="CLU_106757_2_0_6"/>
<dbReference type="Proteomes" id="UP000000265">
    <property type="component" value="Chromosome"/>
</dbReference>
<dbReference type="GO" id="GO:0005829">
    <property type="term" value="C:cytosol"/>
    <property type="evidence" value="ECO:0007669"/>
    <property type="project" value="TreeGrafter"/>
</dbReference>
<dbReference type="GO" id="GO:0043022">
    <property type="term" value="F:ribosome binding"/>
    <property type="evidence" value="ECO:0007669"/>
    <property type="project" value="UniProtKB-UniRule"/>
</dbReference>
<dbReference type="GO" id="GO:0019843">
    <property type="term" value="F:rRNA binding"/>
    <property type="evidence" value="ECO:0007669"/>
    <property type="project" value="UniProtKB-UniRule"/>
</dbReference>
<dbReference type="GO" id="GO:1902626">
    <property type="term" value="P:assembly of large subunit precursor of preribosome"/>
    <property type="evidence" value="ECO:0007669"/>
    <property type="project" value="UniProtKB-UniRule"/>
</dbReference>
<dbReference type="CDD" id="cd16331">
    <property type="entry name" value="YjgA-like"/>
    <property type="match status" value="1"/>
</dbReference>
<dbReference type="FunFam" id="1.10.60.30:FF:000001">
    <property type="entry name" value="UPF0307 protein YjgA"/>
    <property type="match status" value="1"/>
</dbReference>
<dbReference type="FunFam" id="1.10.60.30:FF:000002">
    <property type="entry name" value="UPF0307 protein YjgA"/>
    <property type="match status" value="1"/>
</dbReference>
<dbReference type="Gene3D" id="1.10.60.30">
    <property type="entry name" value="PSPTO4464-like domains"/>
    <property type="match status" value="2"/>
</dbReference>
<dbReference type="HAMAP" id="MF_00765">
    <property type="entry name" value="DarP"/>
    <property type="match status" value="1"/>
</dbReference>
<dbReference type="InterPro" id="IPR006839">
    <property type="entry name" value="DarP"/>
</dbReference>
<dbReference type="InterPro" id="IPR023153">
    <property type="entry name" value="DarP_sf"/>
</dbReference>
<dbReference type="NCBIfam" id="NF003593">
    <property type="entry name" value="PRK05255.1-1"/>
    <property type="match status" value="1"/>
</dbReference>
<dbReference type="PANTHER" id="PTHR38101">
    <property type="entry name" value="UPF0307 PROTEIN YJGA"/>
    <property type="match status" value="1"/>
</dbReference>
<dbReference type="PANTHER" id="PTHR38101:SF1">
    <property type="entry name" value="UPF0307 PROTEIN YJGA"/>
    <property type="match status" value="1"/>
</dbReference>
<dbReference type="Pfam" id="PF04751">
    <property type="entry name" value="DarP"/>
    <property type="match status" value="1"/>
</dbReference>
<dbReference type="PIRSF" id="PIRSF016183">
    <property type="entry name" value="UCP016183"/>
    <property type="match status" value="1"/>
</dbReference>
<dbReference type="SUPFAM" id="SSF158710">
    <property type="entry name" value="PSPTO4464-like"/>
    <property type="match status" value="1"/>
</dbReference>
<reference key="1">
    <citation type="submission" date="2006-09" db="EMBL/GenBank/DDBJ databases">
        <authorList>
            <consortium name="The Klebsiella pneumonia Genome Sequencing Project"/>
            <person name="McClelland M."/>
            <person name="Sanderson E.K."/>
            <person name="Spieth J."/>
            <person name="Clifton W.S."/>
            <person name="Latreille P."/>
            <person name="Sabo A."/>
            <person name="Pepin K."/>
            <person name="Bhonagiri V."/>
            <person name="Porwollik S."/>
            <person name="Ali J."/>
            <person name="Wilson R.K."/>
        </authorList>
    </citation>
    <scope>NUCLEOTIDE SEQUENCE [LARGE SCALE GENOMIC DNA]</scope>
    <source>
        <strain>ATCC 700721 / MGH 78578</strain>
    </source>
</reference>
<name>DARP_KLEP7</name>
<keyword id="KW-0963">Cytoplasm</keyword>
<keyword id="KW-0690">Ribosome biogenesis</keyword>
<keyword id="KW-0694">RNA-binding</keyword>
<keyword id="KW-0699">rRNA-binding</keyword>